<name>RS16_BACAN</name>
<accession>Q81WJ3</accession>
<accession>Q6HUP2</accession>
<accession>Q6KNX5</accession>
<reference key="1">
    <citation type="journal article" date="2003" name="Nature">
        <title>The genome sequence of Bacillus anthracis Ames and comparison to closely related bacteria.</title>
        <authorList>
            <person name="Read T.D."/>
            <person name="Peterson S.N."/>
            <person name="Tourasse N.J."/>
            <person name="Baillie L.W."/>
            <person name="Paulsen I.T."/>
            <person name="Nelson K.E."/>
            <person name="Tettelin H."/>
            <person name="Fouts D.E."/>
            <person name="Eisen J.A."/>
            <person name="Gill S.R."/>
            <person name="Holtzapple E.K."/>
            <person name="Okstad O.A."/>
            <person name="Helgason E."/>
            <person name="Rilstone J."/>
            <person name="Wu M."/>
            <person name="Kolonay J.F."/>
            <person name="Beanan M.J."/>
            <person name="Dodson R.J."/>
            <person name="Brinkac L.M."/>
            <person name="Gwinn M.L."/>
            <person name="DeBoy R.T."/>
            <person name="Madpu R."/>
            <person name="Daugherty S.C."/>
            <person name="Durkin A.S."/>
            <person name="Haft D.H."/>
            <person name="Nelson W.C."/>
            <person name="Peterson J.D."/>
            <person name="Pop M."/>
            <person name="Khouri H.M."/>
            <person name="Radune D."/>
            <person name="Benton J.L."/>
            <person name="Mahamoud Y."/>
            <person name="Jiang L."/>
            <person name="Hance I.R."/>
            <person name="Weidman J.F."/>
            <person name="Berry K.J."/>
            <person name="Plaut R.D."/>
            <person name="Wolf A.M."/>
            <person name="Watkins K.L."/>
            <person name="Nierman W.C."/>
            <person name="Hazen A."/>
            <person name="Cline R.T."/>
            <person name="Redmond C."/>
            <person name="Thwaite J.E."/>
            <person name="White O."/>
            <person name="Salzberg S.L."/>
            <person name="Thomason B."/>
            <person name="Friedlander A.M."/>
            <person name="Koehler T.M."/>
            <person name="Hanna P.C."/>
            <person name="Kolstoe A.-B."/>
            <person name="Fraser C.M."/>
        </authorList>
    </citation>
    <scope>NUCLEOTIDE SEQUENCE [LARGE SCALE GENOMIC DNA]</scope>
    <source>
        <strain>Ames / isolate Porton</strain>
    </source>
</reference>
<reference key="2">
    <citation type="journal article" date="2009" name="J. Bacteriol.">
        <title>The complete genome sequence of Bacillus anthracis Ames 'Ancestor'.</title>
        <authorList>
            <person name="Ravel J."/>
            <person name="Jiang L."/>
            <person name="Stanley S.T."/>
            <person name="Wilson M.R."/>
            <person name="Decker R.S."/>
            <person name="Read T.D."/>
            <person name="Worsham P."/>
            <person name="Keim P.S."/>
            <person name="Salzberg S.L."/>
            <person name="Fraser-Liggett C.M."/>
            <person name="Rasko D.A."/>
        </authorList>
    </citation>
    <scope>NUCLEOTIDE SEQUENCE [LARGE SCALE GENOMIC DNA]</scope>
    <source>
        <strain>Ames ancestor</strain>
    </source>
</reference>
<reference key="3">
    <citation type="submission" date="2004-01" db="EMBL/GenBank/DDBJ databases">
        <title>Complete genome sequence of Bacillus anthracis Sterne.</title>
        <authorList>
            <person name="Brettin T.S."/>
            <person name="Bruce D."/>
            <person name="Challacombe J.F."/>
            <person name="Gilna P."/>
            <person name="Han C."/>
            <person name="Hill K."/>
            <person name="Hitchcock P."/>
            <person name="Jackson P."/>
            <person name="Keim P."/>
            <person name="Longmire J."/>
            <person name="Lucas S."/>
            <person name="Okinaka R."/>
            <person name="Richardson P."/>
            <person name="Rubin E."/>
            <person name="Tice H."/>
        </authorList>
    </citation>
    <scope>NUCLEOTIDE SEQUENCE [LARGE SCALE GENOMIC DNA]</scope>
    <source>
        <strain>Sterne</strain>
    </source>
</reference>
<dbReference type="EMBL" id="AE016879">
    <property type="protein sequence ID" value="AAP27710.1"/>
    <property type="molecule type" value="Genomic_DNA"/>
</dbReference>
<dbReference type="EMBL" id="AE017334">
    <property type="protein sequence ID" value="AAT33096.1"/>
    <property type="molecule type" value="Genomic_DNA"/>
</dbReference>
<dbReference type="EMBL" id="AE017225">
    <property type="protein sequence ID" value="AAT55997.1"/>
    <property type="molecule type" value="Genomic_DNA"/>
</dbReference>
<dbReference type="RefSeq" id="NP_846224.1">
    <property type="nucleotide sequence ID" value="NC_003997.3"/>
</dbReference>
<dbReference type="RefSeq" id="WP_000268750.1">
    <property type="nucleotide sequence ID" value="NZ_WXXJ01000026.1"/>
</dbReference>
<dbReference type="RefSeq" id="YP_029946.1">
    <property type="nucleotide sequence ID" value="NC_005945.1"/>
</dbReference>
<dbReference type="SMR" id="Q81WJ3"/>
<dbReference type="STRING" id="261594.GBAA_3982"/>
<dbReference type="DNASU" id="1086780"/>
<dbReference type="GeneID" id="93007268"/>
<dbReference type="KEGG" id="ban:BA_3982"/>
<dbReference type="KEGG" id="bar:GBAA_3982"/>
<dbReference type="KEGG" id="bat:BAS3695"/>
<dbReference type="PATRIC" id="fig|198094.11.peg.3952"/>
<dbReference type="eggNOG" id="COG0228">
    <property type="taxonomic scope" value="Bacteria"/>
</dbReference>
<dbReference type="HOGENOM" id="CLU_100590_5_0_9"/>
<dbReference type="OMA" id="GFYNPIA"/>
<dbReference type="OrthoDB" id="9807878at2"/>
<dbReference type="Proteomes" id="UP000000427">
    <property type="component" value="Chromosome"/>
</dbReference>
<dbReference type="Proteomes" id="UP000000594">
    <property type="component" value="Chromosome"/>
</dbReference>
<dbReference type="GO" id="GO:0005737">
    <property type="term" value="C:cytoplasm"/>
    <property type="evidence" value="ECO:0007669"/>
    <property type="project" value="UniProtKB-ARBA"/>
</dbReference>
<dbReference type="GO" id="GO:0015935">
    <property type="term" value="C:small ribosomal subunit"/>
    <property type="evidence" value="ECO:0007669"/>
    <property type="project" value="TreeGrafter"/>
</dbReference>
<dbReference type="GO" id="GO:0003735">
    <property type="term" value="F:structural constituent of ribosome"/>
    <property type="evidence" value="ECO:0007669"/>
    <property type="project" value="InterPro"/>
</dbReference>
<dbReference type="GO" id="GO:0006412">
    <property type="term" value="P:translation"/>
    <property type="evidence" value="ECO:0007669"/>
    <property type="project" value="UniProtKB-UniRule"/>
</dbReference>
<dbReference type="FunFam" id="3.30.1320.10:FF:000002">
    <property type="entry name" value="30S ribosomal protein S16"/>
    <property type="match status" value="1"/>
</dbReference>
<dbReference type="Gene3D" id="3.30.1320.10">
    <property type="match status" value="1"/>
</dbReference>
<dbReference type="HAMAP" id="MF_00385">
    <property type="entry name" value="Ribosomal_bS16"/>
    <property type="match status" value="1"/>
</dbReference>
<dbReference type="InterPro" id="IPR000307">
    <property type="entry name" value="Ribosomal_bS16"/>
</dbReference>
<dbReference type="InterPro" id="IPR020592">
    <property type="entry name" value="Ribosomal_bS16_CS"/>
</dbReference>
<dbReference type="InterPro" id="IPR023803">
    <property type="entry name" value="Ribosomal_bS16_dom_sf"/>
</dbReference>
<dbReference type="NCBIfam" id="TIGR00002">
    <property type="entry name" value="S16"/>
    <property type="match status" value="1"/>
</dbReference>
<dbReference type="PANTHER" id="PTHR12919">
    <property type="entry name" value="30S RIBOSOMAL PROTEIN S16"/>
    <property type="match status" value="1"/>
</dbReference>
<dbReference type="PANTHER" id="PTHR12919:SF20">
    <property type="entry name" value="SMALL RIBOSOMAL SUBUNIT PROTEIN BS16M"/>
    <property type="match status" value="1"/>
</dbReference>
<dbReference type="Pfam" id="PF00886">
    <property type="entry name" value="Ribosomal_S16"/>
    <property type="match status" value="1"/>
</dbReference>
<dbReference type="SUPFAM" id="SSF54565">
    <property type="entry name" value="Ribosomal protein S16"/>
    <property type="match status" value="1"/>
</dbReference>
<dbReference type="PROSITE" id="PS00732">
    <property type="entry name" value="RIBOSOMAL_S16"/>
    <property type="match status" value="1"/>
</dbReference>
<keyword id="KW-1185">Reference proteome</keyword>
<keyword id="KW-0687">Ribonucleoprotein</keyword>
<keyword id="KW-0689">Ribosomal protein</keyword>
<proteinExistence type="inferred from homology"/>
<protein>
    <recommendedName>
        <fullName evidence="1">Small ribosomal subunit protein bS16</fullName>
    </recommendedName>
    <alternativeName>
        <fullName evidence="2">30S ribosomal protein S16</fullName>
    </alternativeName>
</protein>
<sequence>MAVKIRLKRMGAKKTPFYRVVVADSRSPRDGRFIEEIGTYNPVAQPAEVKINEEAALKWLGNGAKPSDTVRNLFSNQGIMEKFHLSKQGK</sequence>
<evidence type="ECO:0000255" key="1">
    <source>
        <dbReference type="HAMAP-Rule" id="MF_00385"/>
    </source>
</evidence>
<evidence type="ECO:0000305" key="2"/>
<organism>
    <name type="scientific">Bacillus anthracis</name>
    <dbReference type="NCBI Taxonomy" id="1392"/>
    <lineage>
        <taxon>Bacteria</taxon>
        <taxon>Bacillati</taxon>
        <taxon>Bacillota</taxon>
        <taxon>Bacilli</taxon>
        <taxon>Bacillales</taxon>
        <taxon>Bacillaceae</taxon>
        <taxon>Bacillus</taxon>
        <taxon>Bacillus cereus group</taxon>
    </lineage>
</organism>
<feature type="chain" id="PRO_0000167147" description="Small ribosomal subunit protein bS16">
    <location>
        <begin position="1"/>
        <end position="90"/>
    </location>
</feature>
<gene>
    <name evidence="1" type="primary">rpsP</name>
    <name type="ordered locus">BA_3982</name>
    <name type="ordered locus">GBAA_3982</name>
    <name type="ordered locus">BAS3695</name>
</gene>
<comment type="similarity">
    <text evidence="1">Belongs to the bacterial ribosomal protein bS16 family.</text>
</comment>